<comment type="function">
    <text evidence="1">Transaldolase is important for the balance of metabolites in the pentose-phosphate pathway.</text>
</comment>
<comment type="catalytic activity">
    <reaction evidence="1">
        <text>D-sedoheptulose 7-phosphate + D-glyceraldehyde 3-phosphate = D-erythrose 4-phosphate + beta-D-fructose 6-phosphate</text>
        <dbReference type="Rhea" id="RHEA:17053"/>
        <dbReference type="ChEBI" id="CHEBI:16897"/>
        <dbReference type="ChEBI" id="CHEBI:57483"/>
        <dbReference type="ChEBI" id="CHEBI:57634"/>
        <dbReference type="ChEBI" id="CHEBI:59776"/>
        <dbReference type="EC" id="2.2.1.2"/>
    </reaction>
</comment>
<comment type="pathway">
    <text evidence="1">Carbohydrate degradation; pentose phosphate pathway; D-glyceraldehyde 3-phosphate and beta-D-fructose 6-phosphate from D-ribose 5-phosphate and D-xylulose 5-phosphate (non-oxidative stage): step 2/3.</text>
</comment>
<comment type="subcellular location">
    <subcellularLocation>
        <location evidence="1">Cytoplasm</location>
    </subcellularLocation>
</comment>
<comment type="similarity">
    <text evidence="1">Belongs to the transaldolase family. Type 3B subfamily.</text>
</comment>
<sequence>MEFLLDSANPEEIRQAWAMGVIGGITTNPSLVAKEGRDFHQLLQELVQIVNGPISAEVIALDTEGMLGEARELAAMHPNIVVKIPMTEEGLKAVKVLKAEGIKTNVTLVFSAVQALLAARAGATYVSPFLGRLDDIGENGLLLLADICEVFGVHGLETKVIAASIRNPVHVTEAAKIGADYATVPFNVLCQLFKHPLTEAGIKKFLADWQKLK</sequence>
<protein>
    <recommendedName>
        <fullName evidence="1">Probable transaldolase</fullName>
        <ecNumber evidence="1">2.2.1.2</ecNumber>
    </recommendedName>
</protein>
<keyword id="KW-0963">Cytoplasm</keyword>
<keyword id="KW-0570">Pentose shunt</keyword>
<keyword id="KW-0704">Schiff base</keyword>
<keyword id="KW-0808">Transferase</keyword>
<name>TAL_DESHD</name>
<proteinExistence type="inferred from homology"/>
<reference key="1">
    <citation type="journal article" date="2012" name="BMC Microbiol.">
        <title>Genome sequence of Desulfitobacterium hafniense DCB-2, a Gram-positive anaerobe capable of dehalogenation and metal reduction.</title>
        <authorList>
            <person name="Kim S.H."/>
            <person name="Harzman C."/>
            <person name="Davis J.K."/>
            <person name="Hutcheson R."/>
            <person name="Broderick J.B."/>
            <person name="Marsh T.L."/>
            <person name="Tiedje J.M."/>
        </authorList>
    </citation>
    <scope>NUCLEOTIDE SEQUENCE [LARGE SCALE GENOMIC DNA]</scope>
    <source>
        <strain>DSM 10664 / DCB-2</strain>
    </source>
</reference>
<gene>
    <name evidence="1" type="primary">tal</name>
    <name type="ordered locus">Dhaf_4838</name>
</gene>
<evidence type="ECO:0000255" key="1">
    <source>
        <dbReference type="HAMAP-Rule" id="MF_00494"/>
    </source>
</evidence>
<dbReference type="EC" id="2.2.1.2" evidence="1"/>
<dbReference type="EMBL" id="CP001336">
    <property type="protein sequence ID" value="ACL22833.1"/>
    <property type="molecule type" value="Genomic_DNA"/>
</dbReference>
<dbReference type="SMR" id="B8FZ81"/>
<dbReference type="KEGG" id="dhd:Dhaf_4838"/>
<dbReference type="HOGENOM" id="CLU_079764_0_0_9"/>
<dbReference type="UniPathway" id="UPA00115">
    <property type="reaction ID" value="UER00414"/>
</dbReference>
<dbReference type="Proteomes" id="UP000007726">
    <property type="component" value="Chromosome"/>
</dbReference>
<dbReference type="GO" id="GO:0005737">
    <property type="term" value="C:cytoplasm"/>
    <property type="evidence" value="ECO:0007669"/>
    <property type="project" value="UniProtKB-SubCell"/>
</dbReference>
<dbReference type="GO" id="GO:0016832">
    <property type="term" value="F:aldehyde-lyase activity"/>
    <property type="evidence" value="ECO:0007669"/>
    <property type="project" value="InterPro"/>
</dbReference>
<dbReference type="GO" id="GO:0004801">
    <property type="term" value="F:transaldolase activity"/>
    <property type="evidence" value="ECO:0007669"/>
    <property type="project" value="UniProtKB-UniRule"/>
</dbReference>
<dbReference type="GO" id="GO:0005975">
    <property type="term" value="P:carbohydrate metabolic process"/>
    <property type="evidence" value="ECO:0007669"/>
    <property type="project" value="InterPro"/>
</dbReference>
<dbReference type="GO" id="GO:0006098">
    <property type="term" value="P:pentose-phosphate shunt"/>
    <property type="evidence" value="ECO:0007669"/>
    <property type="project" value="UniProtKB-UniRule"/>
</dbReference>
<dbReference type="CDD" id="cd00956">
    <property type="entry name" value="Transaldolase_FSA"/>
    <property type="match status" value="1"/>
</dbReference>
<dbReference type="FunFam" id="3.20.20.70:FF:000018">
    <property type="entry name" value="Probable transaldolase"/>
    <property type="match status" value="1"/>
</dbReference>
<dbReference type="Gene3D" id="3.20.20.70">
    <property type="entry name" value="Aldolase class I"/>
    <property type="match status" value="1"/>
</dbReference>
<dbReference type="HAMAP" id="MF_00494">
    <property type="entry name" value="Transaldolase_3b"/>
    <property type="match status" value="1"/>
</dbReference>
<dbReference type="InterPro" id="IPR013785">
    <property type="entry name" value="Aldolase_TIM"/>
</dbReference>
<dbReference type="InterPro" id="IPR001585">
    <property type="entry name" value="TAL/FSA"/>
</dbReference>
<dbReference type="InterPro" id="IPR022999">
    <property type="entry name" value="Transaldolase_3B"/>
</dbReference>
<dbReference type="InterPro" id="IPR004731">
    <property type="entry name" value="Transaldolase_3B/F6P_aldolase"/>
</dbReference>
<dbReference type="InterPro" id="IPR018225">
    <property type="entry name" value="Transaldolase_AS"/>
</dbReference>
<dbReference type="InterPro" id="IPR033919">
    <property type="entry name" value="TSA/FSA_arc/bac"/>
</dbReference>
<dbReference type="NCBIfam" id="TIGR00875">
    <property type="entry name" value="fsa_talC_mipB"/>
    <property type="match status" value="1"/>
</dbReference>
<dbReference type="PANTHER" id="PTHR10683">
    <property type="entry name" value="TRANSALDOLASE"/>
    <property type="match status" value="1"/>
</dbReference>
<dbReference type="PANTHER" id="PTHR10683:SF36">
    <property type="entry name" value="TRANSALDOLASE"/>
    <property type="match status" value="1"/>
</dbReference>
<dbReference type="Pfam" id="PF00923">
    <property type="entry name" value="TAL_FSA"/>
    <property type="match status" value="1"/>
</dbReference>
<dbReference type="SUPFAM" id="SSF51569">
    <property type="entry name" value="Aldolase"/>
    <property type="match status" value="1"/>
</dbReference>
<dbReference type="PROSITE" id="PS01054">
    <property type="entry name" value="TRANSALDOLASE_1"/>
    <property type="match status" value="1"/>
</dbReference>
<dbReference type="PROSITE" id="PS00958">
    <property type="entry name" value="TRANSALDOLASE_2"/>
    <property type="match status" value="1"/>
</dbReference>
<feature type="chain" id="PRO_1000198472" description="Probable transaldolase">
    <location>
        <begin position="1"/>
        <end position="213"/>
    </location>
</feature>
<feature type="active site" description="Schiff-base intermediate with substrate" evidence="1">
    <location>
        <position position="83"/>
    </location>
</feature>
<organism>
    <name type="scientific">Desulfitobacterium hafniense (strain DSM 10664 / DCB-2)</name>
    <dbReference type="NCBI Taxonomy" id="272564"/>
    <lineage>
        <taxon>Bacteria</taxon>
        <taxon>Bacillati</taxon>
        <taxon>Bacillota</taxon>
        <taxon>Clostridia</taxon>
        <taxon>Eubacteriales</taxon>
        <taxon>Desulfitobacteriaceae</taxon>
        <taxon>Desulfitobacterium</taxon>
    </lineage>
</organism>
<accession>B8FZ81</accession>